<comment type="catalytic activity">
    <reaction evidence="1">
        <text>D-ribulose + ATP = D-ribulose 5-phosphate + ADP + H(+)</text>
        <dbReference type="Rhea" id="RHEA:17601"/>
        <dbReference type="ChEBI" id="CHEBI:15378"/>
        <dbReference type="ChEBI" id="CHEBI:17173"/>
        <dbReference type="ChEBI" id="CHEBI:30616"/>
        <dbReference type="ChEBI" id="CHEBI:58121"/>
        <dbReference type="ChEBI" id="CHEBI:456216"/>
        <dbReference type="EC" id="2.7.1.16"/>
    </reaction>
</comment>
<comment type="catalytic activity">
    <reaction evidence="1">
        <text>L-ribulose + ATP = L-ribulose 5-phosphate + ADP + H(+)</text>
        <dbReference type="Rhea" id="RHEA:22072"/>
        <dbReference type="ChEBI" id="CHEBI:15378"/>
        <dbReference type="ChEBI" id="CHEBI:16880"/>
        <dbReference type="ChEBI" id="CHEBI:30616"/>
        <dbReference type="ChEBI" id="CHEBI:58226"/>
        <dbReference type="ChEBI" id="CHEBI:456216"/>
        <dbReference type="EC" id="2.7.1.16"/>
    </reaction>
</comment>
<comment type="pathway">
    <text evidence="1">Carbohydrate degradation; L-arabinose degradation via L-ribulose; D-xylulose 5-phosphate from L-arabinose (bacterial route): step 2/3.</text>
</comment>
<comment type="similarity">
    <text evidence="1">Belongs to the ribulokinase family.</text>
</comment>
<evidence type="ECO:0000255" key="1">
    <source>
        <dbReference type="HAMAP-Rule" id="MF_00520"/>
    </source>
</evidence>
<sequence length="545" mass="60967">MSYSIGIDYGTASGRVFLINTTNGQVVSKFVKPYTHGVIESELNGLKIPHTYALQNSNDYLEIMEEGISYIVRESKIDPDNIVGIGIDFTSSTIIFTDENLNPVHNLKQFKNNPHAYVKLWKHHGAYKEAEKLYQTAIENNNKWLGHYGYNVSSEWMIPKIMEVMNRAPEIMEKTAYIMEAGDWIVNKLTNKNIRSNCGLGFKAFWEEETGFHYDLFDKIDPKLSKVIQDKVSAPVVNIGEAVGKLDDKMAQKLGLSKETMVSPFIIDAHASLLGIGSEKDKEMTMVMGTSTCHLMLNEKQHQVPGISGSVKGAIIPELFAYEAGQSAVGDLFEYVAKQAPKSYVDEAANRNMTVFELMNEKIKHQMPGESGLIALDWHNGNRSVLSDSNLTGCIFGLTLQTKHEDIYRAYLEATAFGTKMIMQQYQDWHMEVEKVFACGGIPKKNAVMMDIYANVLNKKLIVMDSEYAPAIGAAILGAVSGGAHNSINDAVDAMKEPILYEINPEAEKVQRYETLFKAYKALHDIHGYKKANIMKDIQSLRVEG</sequence>
<name>ARAB_STAAS</name>
<proteinExistence type="inferred from homology"/>
<organism>
    <name type="scientific">Staphylococcus aureus (strain MSSA476)</name>
    <dbReference type="NCBI Taxonomy" id="282459"/>
    <lineage>
        <taxon>Bacteria</taxon>
        <taxon>Bacillati</taxon>
        <taxon>Bacillota</taxon>
        <taxon>Bacilli</taxon>
        <taxon>Bacillales</taxon>
        <taxon>Staphylococcaceae</taxon>
        <taxon>Staphylococcus</taxon>
    </lineage>
</organism>
<accession>Q6GBT5</accession>
<gene>
    <name evidence="1" type="primary">araB</name>
    <name type="ordered locus">SAS0510</name>
</gene>
<keyword id="KW-0054">Arabinose catabolism</keyword>
<keyword id="KW-0067">ATP-binding</keyword>
<keyword id="KW-0119">Carbohydrate metabolism</keyword>
<keyword id="KW-0418">Kinase</keyword>
<keyword id="KW-0547">Nucleotide-binding</keyword>
<keyword id="KW-0808">Transferase</keyword>
<reference key="1">
    <citation type="journal article" date="2004" name="Proc. Natl. Acad. Sci. U.S.A.">
        <title>Complete genomes of two clinical Staphylococcus aureus strains: evidence for the rapid evolution of virulence and drug resistance.</title>
        <authorList>
            <person name="Holden M.T.G."/>
            <person name="Feil E.J."/>
            <person name="Lindsay J.A."/>
            <person name="Peacock S.J."/>
            <person name="Day N.P.J."/>
            <person name="Enright M.C."/>
            <person name="Foster T.J."/>
            <person name="Moore C.E."/>
            <person name="Hurst L."/>
            <person name="Atkin R."/>
            <person name="Barron A."/>
            <person name="Bason N."/>
            <person name="Bentley S.D."/>
            <person name="Chillingworth C."/>
            <person name="Chillingworth T."/>
            <person name="Churcher C."/>
            <person name="Clark L."/>
            <person name="Corton C."/>
            <person name="Cronin A."/>
            <person name="Doggett J."/>
            <person name="Dowd L."/>
            <person name="Feltwell T."/>
            <person name="Hance Z."/>
            <person name="Harris B."/>
            <person name="Hauser H."/>
            <person name="Holroyd S."/>
            <person name="Jagels K."/>
            <person name="James K.D."/>
            <person name="Lennard N."/>
            <person name="Line A."/>
            <person name="Mayes R."/>
            <person name="Moule S."/>
            <person name="Mungall K."/>
            <person name="Ormond D."/>
            <person name="Quail M.A."/>
            <person name="Rabbinowitsch E."/>
            <person name="Rutherford K.M."/>
            <person name="Sanders M."/>
            <person name="Sharp S."/>
            <person name="Simmonds M."/>
            <person name="Stevens K."/>
            <person name="Whitehead S."/>
            <person name="Barrell B.G."/>
            <person name="Spratt B.G."/>
            <person name="Parkhill J."/>
        </authorList>
    </citation>
    <scope>NUCLEOTIDE SEQUENCE [LARGE SCALE GENOMIC DNA]</scope>
    <source>
        <strain>MSSA476</strain>
    </source>
</reference>
<protein>
    <recommendedName>
        <fullName evidence="1">Ribulokinase</fullName>
        <ecNumber evidence="1">2.7.1.16</ecNumber>
    </recommendedName>
</protein>
<dbReference type="EC" id="2.7.1.16" evidence="1"/>
<dbReference type="EMBL" id="BX571857">
    <property type="protein sequence ID" value="CAG42285.1"/>
    <property type="molecule type" value="Genomic_DNA"/>
</dbReference>
<dbReference type="RefSeq" id="WP_000122337.1">
    <property type="nucleotide sequence ID" value="NC_002953.3"/>
</dbReference>
<dbReference type="SMR" id="Q6GBT5"/>
<dbReference type="KEGG" id="sas:SAS0510"/>
<dbReference type="HOGENOM" id="CLU_009281_9_1_9"/>
<dbReference type="UniPathway" id="UPA00145">
    <property type="reaction ID" value="UER00566"/>
</dbReference>
<dbReference type="GO" id="GO:0005737">
    <property type="term" value="C:cytoplasm"/>
    <property type="evidence" value="ECO:0007669"/>
    <property type="project" value="TreeGrafter"/>
</dbReference>
<dbReference type="GO" id="GO:0005524">
    <property type="term" value="F:ATP binding"/>
    <property type="evidence" value="ECO:0007669"/>
    <property type="project" value="UniProtKB-KW"/>
</dbReference>
<dbReference type="GO" id="GO:0019150">
    <property type="term" value="F:D-ribulokinase activity"/>
    <property type="evidence" value="ECO:0007669"/>
    <property type="project" value="RHEA"/>
</dbReference>
<dbReference type="GO" id="GO:0008741">
    <property type="term" value="F:ribulokinase activity"/>
    <property type="evidence" value="ECO:0007669"/>
    <property type="project" value="UniProtKB-UniRule"/>
</dbReference>
<dbReference type="GO" id="GO:0019569">
    <property type="term" value="P:L-arabinose catabolic process to xylulose 5-phosphate"/>
    <property type="evidence" value="ECO:0007669"/>
    <property type="project" value="UniProtKB-UniRule"/>
</dbReference>
<dbReference type="CDD" id="cd07781">
    <property type="entry name" value="ASKHA_NBD_FGGY_L-RBK"/>
    <property type="match status" value="1"/>
</dbReference>
<dbReference type="Gene3D" id="1.20.58.2240">
    <property type="match status" value="1"/>
</dbReference>
<dbReference type="Gene3D" id="3.30.420.40">
    <property type="match status" value="1"/>
</dbReference>
<dbReference type="HAMAP" id="MF_00520">
    <property type="entry name" value="Ribulokinase"/>
    <property type="match status" value="1"/>
</dbReference>
<dbReference type="InterPro" id="IPR043129">
    <property type="entry name" value="ATPase_NBD"/>
</dbReference>
<dbReference type="InterPro" id="IPR000577">
    <property type="entry name" value="Carb_kinase_FGGY"/>
</dbReference>
<dbReference type="InterPro" id="IPR018485">
    <property type="entry name" value="FGGY_C"/>
</dbReference>
<dbReference type="InterPro" id="IPR018484">
    <property type="entry name" value="FGGY_N"/>
</dbReference>
<dbReference type="InterPro" id="IPR005929">
    <property type="entry name" value="Ribulokinase"/>
</dbReference>
<dbReference type="NCBIfam" id="NF003154">
    <property type="entry name" value="PRK04123.1"/>
    <property type="match status" value="1"/>
</dbReference>
<dbReference type="PANTHER" id="PTHR43435:SF4">
    <property type="entry name" value="FGGY CARBOHYDRATE KINASE DOMAIN-CONTAINING PROTEIN"/>
    <property type="match status" value="1"/>
</dbReference>
<dbReference type="PANTHER" id="PTHR43435">
    <property type="entry name" value="RIBULOKINASE"/>
    <property type="match status" value="1"/>
</dbReference>
<dbReference type="Pfam" id="PF02782">
    <property type="entry name" value="FGGY_C"/>
    <property type="match status" value="1"/>
</dbReference>
<dbReference type="Pfam" id="PF00370">
    <property type="entry name" value="FGGY_N"/>
    <property type="match status" value="1"/>
</dbReference>
<dbReference type="PIRSF" id="PIRSF000538">
    <property type="entry name" value="GlpK"/>
    <property type="match status" value="1"/>
</dbReference>
<dbReference type="SUPFAM" id="SSF53067">
    <property type="entry name" value="Actin-like ATPase domain"/>
    <property type="match status" value="2"/>
</dbReference>
<feature type="chain" id="PRO_0000198370" description="Ribulokinase">
    <location>
        <begin position="1"/>
        <end position="545"/>
    </location>
</feature>